<dbReference type="EMBL" id="CP000705">
    <property type="protein sequence ID" value="ABQ82287.1"/>
    <property type="molecule type" value="Genomic_DNA"/>
</dbReference>
<dbReference type="RefSeq" id="WP_003665243.1">
    <property type="nucleotide sequence ID" value="NZ_AZDD01000016.1"/>
</dbReference>
<dbReference type="SMR" id="A5VHG3"/>
<dbReference type="STRING" id="557436.Lreu_0011"/>
<dbReference type="GeneID" id="77191346"/>
<dbReference type="KEGG" id="lre:Lreu_0011"/>
<dbReference type="PATRIC" id="fig|557436.17.peg.520"/>
<dbReference type="eggNOG" id="COG0359">
    <property type="taxonomic scope" value="Bacteria"/>
</dbReference>
<dbReference type="HOGENOM" id="CLU_078938_3_2_9"/>
<dbReference type="Proteomes" id="UP000001991">
    <property type="component" value="Chromosome"/>
</dbReference>
<dbReference type="GO" id="GO:1990904">
    <property type="term" value="C:ribonucleoprotein complex"/>
    <property type="evidence" value="ECO:0007669"/>
    <property type="project" value="UniProtKB-KW"/>
</dbReference>
<dbReference type="GO" id="GO:0005840">
    <property type="term" value="C:ribosome"/>
    <property type="evidence" value="ECO:0007669"/>
    <property type="project" value="UniProtKB-KW"/>
</dbReference>
<dbReference type="GO" id="GO:0019843">
    <property type="term" value="F:rRNA binding"/>
    <property type="evidence" value="ECO:0007669"/>
    <property type="project" value="UniProtKB-UniRule"/>
</dbReference>
<dbReference type="GO" id="GO:0003735">
    <property type="term" value="F:structural constituent of ribosome"/>
    <property type="evidence" value="ECO:0007669"/>
    <property type="project" value="InterPro"/>
</dbReference>
<dbReference type="GO" id="GO:0006412">
    <property type="term" value="P:translation"/>
    <property type="evidence" value="ECO:0007669"/>
    <property type="project" value="UniProtKB-UniRule"/>
</dbReference>
<dbReference type="FunFam" id="3.10.430.100:FF:000002">
    <property type="entry name" value="50S ribosomal protein L9"/>
    <property type="match status" value="1"/>
</dbReference>
<dbReference type="FunFam" id="3.40.5.10:FF:000002">
    <property type="entry name" value="50S ribosomal protein L9"/>
    <property type="match status" value="1"/>
</dbReference>
<dbReference type="Gene3D" id="3.10.430.100">
    <property type="entry name" value="Ribosomal protein L9, C-terminal domain"/>
    <property type="match status" value="1"/>
</dbReference>
<dbReference type="Gene3D" id="3.40.5.10">
    <property type="entry name" value="Ribosomal protein L9, N-terminal domain"/>
    <property type="match status" value="1"/>
</dbReference>
<dbReference type="HAMAP" id="MF_00503">
    <property type="entry name" value="Ribosomal_bL9"/>
    <property type="match status" value="1"/>
</dbReference>
<dbReference type="InterPro" id="IPR000244">
    <property type="entry name" value="Ribosomal_bL9"/>
</dbReference>
<dbReference type="InterPro" id="IPR009027">
    <property type="entry name" value="Ribosomal_bL9/RNase_H1_N"/>
</dbReference>
<dbReference type="InterPro" id="IPR020594">
    <property type="entry name" value="Ribosomal_bL9_bac/chp"/>
</dbReference>
<dbReference type="InterPro" id="IPR020069">
    <property type="entry name" value="Ribosomal_bL9_C"/>
</dbReference>
<dbReference type="InterPro" id="IPR036791">
    <property type="entry name" value="Ribosomal_bL9_C_sf"/>
</dbReference>
<dbReference type="InterPro" id="IPR020070">
    <property type="entry name" value="Ribosomal_bL9_N"/>
</dbReference>
<dbReference type="InterPro" id="IPR036935">
    <property type="entry name" value="Ribosomal_bL9_N_sf"/>
</dbReference>
<dbReference type="NCBIfam" id="TIGR00158">
    <property type="entry name" value="L9"/>
    <property type="match status" value="1"/>
</dbReference>
<dbReference type="PANTHER" id="PTHR21368">
    <property type="entry name" value="50S RIBOSOMAL PROTEIN L9"/>
    <property type="match status" value="1"/>
</dbReference>
<dbReference type="Pfam" id="PF03948">
    <property type="entry name" value="Ribosomal_L9_C"/>
    <property type="match status" value="1"/>
</dbReference>
<dbReference type="Pfam" id="PF01281">
    <property type="entry name" value="Ribosomal_L9_N"/>
    <property type="match status" value="1"/>
</dbReference>
<dbReference type="SUPFAM" id="SSF55658">
    <property type="entry name" value="L9 N-domain-like"/>
    <property type="match status" value="1"/>
</dbReference>
<dbReference type="SUPFAM" id="SSF55653">
    <property type="entry name" value="Ribosomal protein L9 C-domain"/>
    <property type="match status" value="1"/>
</dbReference>
<dbReference type="PROSITE" id="PS00651">
    <property type="entry name" value="RIBOSOMAL_L9"/>
    <property type="match status" value="1"/>
</dbReference>
<name>RL9_LIMRD</name>
<proteinExistence type="inferred from homology"/>
<gene>
    <name evidence="1" type="primary">rplI</name>
    <name type="ordered locus">Lreu_0011</name>
</gene>
<reference key="1">
    <citation type="journal article" date="2011" name="PLoS Genet.">
        <title>The evolution of host specialization in the vertebrate gut symbiont Lactobacillus reuteri.</title>
        <authorList>
            <person name="Frese S.A."/>
            <person name="Benson A.K."/>
            <person name="Tannock G.W."/>
            <person name="Loach D.M."/>
            <person name="Kim J."/>
            <person name="Zhang M."/>
            <person name="Oh P.L."/>
            <person name="Heng N.C."/>
            <person name="Patil P.B."/>
            <person name="Juge N."/>
            <person name="Mackenzie D.A."/>
            <person name="Pearson B.M."/>
            <person name="Lapidus A."/>
            <person name="Dalin E."/>
            <person name="Tice H."/>
            <person name="Goltsman E."/>
            <person name="Land M."/>
            <person name="Hauser L."/>
            <person name="Ivanova N."/>
            <person name="Kyrpides N.C."/>
            <person name="Walter J."/>
        </authorList>
    </citation>
    <scope>NUCLEOTIDE SEQUENCE [LARGE SCALE GENOMIC DNA]</scope>
    <source>
        <strain>DSM 20016</strain>
    </source>
</reference>
<sequence>MKVIFTQDVRGRGQRGQIKEVPDGYAQNYLIKRGLAKQATKAAMSQLKGQQRAEEKHAAEELADAKRMKKILEDDNTVVELSGKAGTDGRMFGSISTKQIATALQKQFDLKIDKRKIELAAPIKALGYVNVPIKLHPEVEAQIRVHIAEK</sequence>
<evidence type="ECO:0000255" key="1">
    <source>
        <dbReference type="HAMAP-Rule" id="MF_00503"/>
    </source>
</evidence>
<evidence type="ECO:0000305" key="2"/>
<feature type="chain" id="PRO_1000060509" description="Large ribosomal subunit protein bL9">
    <location>
        <begin position="1"/>
        <end position="150"/>
    </location>
</feature>
<protein>
    <recommendedName>
        <fullName evidence="1">Large ribosomal subunit protein bL9</fullName>
    </recommendedName>
    <alternativeName>
        <fullName evidence="2">50S ribosomal protein L9</fullName>
    </alternativeName>
</protein>
<organism>
    <name type="scientific">Limosilactobacillus reuteri (strain DSM 20016)</name>
    <name type="common">Lactobacillus reuteri</name>
    <dbReference type="NCBI Taxonomy" id="557436"/>
    <lineage>
        <taxon>Bacteria</taxon>
        <taxon>Bacillati</taxon>
        <taxon>Bacillota</taxon>
        <taxon>Bacilli</taxon>
        <taxon>Lactobacillales</taxon>
        <taxon>Lactobacillaceae</taxon>
        <taxon>Limosilactobacillus</taxon>
    </lineage>
</organism>
<comment type="function">
    <text evidence="1">Binds to the 23S rRNA.</text>
</comment>
<comment type="similarity">
    <text evidence="1">Belongs to the bacterial ribosomal protein bL9 family.</text>
</comment>
<accession>A5VHG3</accession>
<keyword id="KW-1185">Reference proteome</keyword>
<keyword id="KW-0687">Ribonucleoprotein</keyword>
<keyword id="KW-0689">Ribosomal protein</keyword>
<keyword id="KW-0694">RNA-binding</keyword>
<keyword id="KW-0699">rRNA-binding</keyword>